<dbReference type="EMBL" id="AC105379">
    <property type="protein sequence ID" value="AAX80226.1"/>
    <property type="molecule type" value="Genomic_DNA"/>
</dbReference>
<dbReference type="EMBL" id="CP000066">
    <property type="protein sequence ID" value="AAZ10234.1"/>
    <property type="molecule type" value="Genomic_DNA"/>
</dbReference>
<dbReference type="RefSeq" id="XP_843793.1">
    <property type="nucleotide sequence ID" value="XM_838700.1"/>
</dbReference>
<dbReference type="PDB" id="9E5C">
    <property type="method" value="EM"/>
    <property type="resolution" value="3.20 A"/>
    <property type="chains" value="6r=1-481"/>
</dbReference>
<dbReference type="PDBsum" id="9E5C"/>
<dbReference type="EMDB" id="EMD-47524"/>
<dbReference type="SMR" id="Q57ZB2"/>
<dbReference type="PaxDb" id="5691-AAZ10234"/>
<dbReference type="GeneID" id="3656141"/>
<dbReference type="KEGG" id="tbr:Tb927.3.1990"/>
<dbReference type="VEuPathDB" id="TriTrypDB:Tb927.3.1990"/>
<dbReference type="eggNOG" id="ENOG502RA4M">
    <property type="taxonomic scope" value="Eukaryota"/>
</dbReference>
<dbReference type="InParanoid" id="Q57ZB2"/>
<dbReference type="OMA" id="QLAWMSG"/>
<dbReference type="OrthoDB" id="626167at2759"/>
<dbReference type="Proteomes" id="UP000008524">
    <property type="component" value="Chromosome 3"/>
</dbReference>
<dbReference type="GO" id="GO:0005930">
    <property type="term" value="C:axoneme"/>
    <property type="evidence" value="ECO:0000314"/>
    <property type="project" value="UniProtKB"/>
</dbReference>
<dbReference type="GO" id="GO:0035869">
    <property type="term" value="C:ciliary transition zone"/>
    <property type="evidence" value="ECO:0000314"/>
    <property type="project" value="GeneDB"/>
</dbReference>
<dbReference type="GO" id="GO:0005929">
    <property type="term" value="C:cilium"/>
    <property type="evidence" value="ECO:0000314"/>
    <property type="project" value="GeneDB"/>
</dbReference>
<dbReference type="GO" id="GO:0031514">
    <property type="term" value="C:motile cilium"/>
    <property type="evidence" value="ECO:0007669"/>
    <property type="project" value="UniProtKB-KW"/>
</dbReference>
<dbReference type="GO" id="GO:0003341">
    <property type="term" value="P:cilium movement"/>
    <property type="evidence" value="ECO:0000318"/>
    <property type="project" value="GO_Central"/>
</dbReference>
<dbReference type="GO" id="GO:0060285">
    <property type="term" value="P:cilium-dependent cell motility"/>
    <property type="evidence" value="ECO:0000315"/>
    <property type="project" value="GeneDB"/>
</dbReference>
<dbReference type="Gene3D" id="1.25.40.10">
    <property type="entry name" value="Tetratricopeptide repeat domain"/>
    <property type="match status" value="2"/>
</dbReference>
<dbReference type="InterPro" id="IPR051476">
    <property type="entry name" value="Bac_ResReg_Asp_Phosphatase"/>
</dbReference>
<dbReference type="InterPro" id="IPR011990">
    <property type="entry name" value="TPR-like_helical_dom_sf"/>
</dbReference>
<dbReference type="InterPro" id="IPR019734">
    <property type="entry name" value="TPR_rpt"/>
</dbReference>
<dbReference type="PANTHER" id="PTHR46630">
    <property type="entry name" value="TETRATRICOPEPTIDE REPEAT PROTEIN 29"/>
    <property type="match status" value="1"/>
</dbReference>
<dbReference type="PANTHER" id="PTHR46630:SF1">
    <property type="entry name" value="TETRATRICOPEPTIDE REPEAT PROTEIN 29"/>
    <property type="match status" value="1"/>
</dbReference>
<dbReference type="Pfam" id="PF13424">
    <property type="entry name" value="TPR_12"/>
    <property type="match status" value="1"/>
</dbReference>
<dbReference type="Pfam" id="PF13181">
    <property type="entry name" value="TPR_8"/>
    <property type="match status" value="1"/>
</dbReference>
<dbReference type="SUPFAM" id="SSF48452">
    <property type="entry name" value="TPR-like"/>
    <property type="match status" value="2"/>
</dbReference>
<dbReference type="PROSITE" id="PS50005">
    <property type="entry name" value="TPR"/>
    <property type="match status" value="1"/>
</dbReference>
<protein>
    <recommendedName>
        <fullName evidence="6">Tetratricopeptide repeat protein 29</fullName>
        <shortName evidence="5">TbTTC29</shortName>
    </recommendedName>
</protein>
<sequence length="481" mass="53497">MASVGPVKTKTVTLKELTPPIPSPEKSACKGAKPDSNHMALVPVKPSQPGSGKLITRTRLQRDSLISQQQRDALVVSSFGIGTTRHGQPDNTTSSIKDGFSTAAGGVNCASVVVAQSEKDSVRFHLCVDALAEGCVNTFIHLFHLSHRDPVCVDQLAQTLFTIPDEKLVWVKSQLAAVEVLRRQSEFRDVCERCQLLADYFESERDCDEAAWHYDVALRIAMESLDRPLEQEVRLSFGAFFERHKQLRKAIALFEEVYHLAMALNDVETAVEANYRLIRTYLSLSAELKDTNPKEAISFLERALDMSQRVKSSKDEADSLHALGNIYESMGDFRRALEYQKRFFEVARAANLVEREKRASLCVASMQERMNMTDEAVHSLQCALELSEKAADIEGVYRATMQLGQAYDSSGDHEKALMSYRANFGAARKLNNSDLTDQARVALGFALGEHYLKHAGGGRGYVPIVCDDVKAQLEWMSNGIL</sequence>
<reference evidence="9" key="1">
    <citation type="journal article" date="2005" name="Science">
        <title>The genome of the African trypanosome Trypanosoma brucei.</title>
        <authorList>
            <person name="Berriman M."/>
            <person name="Ghedin E."/>
            <person name="Hertz-Fowler C."/>
            <person name="Blandin G."/>
            <person name="Renauld H."/>
            <person name="Bartholomeu D.C."/>
            <person name="Lennard N.J."/>
            <person name="Caler E."/>
            <person name="Hamlin N.E."/>
            <person name="Haas B."/>
            <person name="Bohme U."/>
            <person name="Hannick L."/>
            <person name="Aslett M.A."/>
            <person name="Shallom J."/>
            <person name="Marcello L."/>
            <person name="Hou L."/>
            <person name="Wickstead B."/>
            <person name="Alsmark U.C.M."/>
            <person name="Arrowsmith C."/>
            <person name="Atkin R.J."/>
            <person name="Barron A.J."/>
            <person name="Bringaud F."/>
            <person name="Brooks K."/>
            <person name="Carrington M."/>
            <person name="Cherevach I."/>
            <person name="Chillingworth T.J."/>
            <person name="Churcher C."/>
            <person name="Clark L.N."/>
            <person name="Corton C.H."/>
            <person name="Cronin A."/>
            <person name="Davies R.M."/>
            <person name="Doggett J."/>
            <person name="Djikeng A."/>
            <person name="Feldblyum T."/>
            <person name="Field M.C."/>
            <person name="Fraser A."/>
            <person name="Goodhead I."/>
            <person name="Hance Z."/>
            <person name="Harper D."/>
            <person name="Harris B.R."/>
            <person name="Hauser H."/>
            <person name="Hostetler J."/>
            <person name="Ivens A."/>
            <person name="Jagels K."/>
            <person name="Johnson D."/>
            <person name="Johnson J."/>
            <person name="Jones K."/>
            <person name="Kerhornou A.X."/>
            <person name="Koo H."/>
            <person name="Larke N."/>
            <person name="Landfear S."/>
            <person name="Larkin C."/>
            <person name="Leech V."/>
            <person name="Line A."/>
            <person name="Lord A."/>
            <person name="Macleod A."/>
            <person name="Mooney P.J."/>
            <person name="Moule S."/>
            <person name="Martin D.M."/>
            <person name="Morgan G.W."/>
            <person name="Mungall K."/>
            <person name="Norbertczak H."/>
            <person name="Ormond D."/>
            <person name="Pai G."/>
            <person name="Peacock C.S."/>
            <person name="Peterson J."/>
            <person name="Quail M.A."/>
            <person name="Rabbinowitsch E."/>
            <person name="Rajandream M.A."/>
            <person name="Reitter C."/>
            <person name="Salzberg S.L."/>
            <person name="Sanders M."/>
            <person name="Schobel S."/>
            <person name="Sharp S."/>
            <person name="Simmonds M."/>
            <person name="Simpson A.J."/>
            <person name="Tallon L."/>
            <person name="Turner C.M."/>
            <person name="Tait A."/>
            <person name="Tivey A.R."/>
            <person name="Van Aken S."/>
            <person name="Walker D."/>
            <person name="Wanless D."/>
            <person name="Wang S."/>
            <person name="White B."/>
            <person name="White O."/>
            <person name="Whitehead S."/>
            <person name="Woodward J."/>
            <person name="Wortman J."/>
            <person name="Adams M.D."/>
            <person name="Embley T.M."/>
            <person name="Gull K."/>
            <person name="Ullu E."/>
            <person name="Barry J.D."/>
            <person name="Fairlamb A.H."/>
            <person name="Opperdoes F."/>
            <person name="Barrell B.G."/>
            <person name="Donelson J.E."/>
            <person name="Hall N."/>
            <person name="Fraser C.M."/>
            <person name="Melville S.E."/>
            <person name="El-Sayed N.M.A."/>
        </authorList>
    </citation>
    <scope>NUCLEOTIDE SEQUENCE [LARGE SCALE GENOMIC DNA]</scope>
    <source>
        <strain evidence="9">927/4 GUTat10.1</strain>
    </source>
</reference>
<reference evidence="6" key="2">
    <citation type="journal article" date="2019" name="Am. J. Hum. Genet.">
        <title>Mutations in TTC29, Encoding an Evolutionarily Conserved Axonemal Protein, Result in Asthenozoospermia and Male Infertility.</title>
        <authorList>
            <person name="Lores P."/>
            <person name="Dacheux D."/>
            <person name="Kherraf Z.E."/>
            <person name="Nsota Mbango J.F."/>
            <person name="Coutton C."/>
            <person name="Stouvenel L."/>
            <person name="Ialy-Radio C."/>
            <person name="Amiri-Yekta A."/>
            <person name="Whitfield M."/>
            <person name="Schmitt A."/>
            <person name="Cazin C."/>
            <person name="Givelet M."/>
            <person name="Ferreux L."/>
            <person name="Fourati Ben Mustapha S."/>
            <person name="Halouani L."/>
            <person name="Marrakchi O."/>
            <person name="Daneshipour A."/>
            <person name="El Khouri E."/>
            <person name="Do Cruzeiro M."/>
            <person name="Favier M."/>
            <person name="Guillonneau F."/>
            <person name="Chaudhry M."/>
            <person name="Sakheli Z."/>
            <person name="Wolf J.P."/>
            <person name="Patrat C."/>
            <person name="Gacon G."/>
            <person name="Savinov S.N."/>
            <person name="Hosseini S.H."/>
            <person name="Robinson D.R."/>
            <person name="Zouari R."/>
            <person name="Ziyyat A."/>
            <person name="Arnoult C."/>
            <person name="Dulioust E."/>
            <person name="Bonhivers M."/>
            <person name="Ray P.F."/>
            <person name="Toure A."/>
        </authorList>
    </citation>
    <scope>FUNCTION</scope>
    <scope>SUBCELLULAR LOCATION</scope>
    <scope>DOMAIN</scope>
    <scope>DISRUPTION PHENOTYPE</scope>
</reference>
<reference evidence="6" key="3">
    <citation type="journal article" date="2023" name="Elife">
        <title>Novel axonemal protein ZMYND12 interacts with TTC29 and DNAH1, and is required for male fertility and flagellum function.</title>
        <authorList>
            <person name="Dacheux D."/>
            <person name="Martinez G."/>
            <person name="Broster Reix C.E."/>
            <person name="Beurois J."/>
            <person name="Lores P."/>
            <person name="Tounkara M."/>
            <person name="Dupuy J.W."/>
            <person name="Robinson D.R."/>
            <person name="Loeuillet C."/>
            <person name="Lambert E."/>
            <person name="Wehbe Z."/>
            <person name="Escoffier J."/>
            <person name="Amiri-Yekta A."/>
            <person name="Daneshipour A."/>
            <person name="Hosseini S.H."/>
            <person name="Zouari R."/>
            <person name="Mustapha S.F.B."/>
            <person name="Halouani L."/>
            <person name="Jiang X."/>
            <person name="Shen Y."/>
            <person name="Liu C."/>
            <person name="Thierry-Mieg N."/>
            <person name="Septier A."/>
            <person name="Bidart M."/>
            <person name="Satre V."/>
            <person name="Cazin C."/>
            <person name="Kherraf Z.E."/>
            <person name="Arnoult C."/>
            <person name="Ray P.F."/>
            <person name="Toure A."/>
            <person name="Bonhivers M."/>
            <person name="Coutton C."/>
        </authorList>
    </citation>
    <scope>INTERACTION WITH TAX-1</scope>
    <scope>SUBCELLULAR LOCATION</scope>
</reference>
<organism evidence="9">
    <name type="scientific">Trypanosoma brucei brucei (strain 927/4 GUTat10.1)</name>
    <dbReference type="NCBI Taxonomy" id="185431"/>
    <lineage>
        <taxon>Eukaryota</taxon>
        <taxon>Discoba</taxon>
        <taxon>Euglenozoa</taxon>
        <taxon>Kinetoplastea</taxon>
        <taxon>Metakinetoplastina</taxon>
        <taxon>Trypanosomatida</taxon>
        <taxon>Trypanosomatidae</taxon>
        <taxon>Trypanosoma</taxon>
    </lineage>
</organism>
<comment type="function">
    <text evidence="3">Axonemal protein which is implicated in axonemal and/or peri-axonemal structure assembly and regulates flagellum assembly and beating.</text>
</comment>
<comment type="subunit">
    <text evidence="4">Interacts with TAX-1.</text>
</comment>
<comment type="subcellular location">
    <subcellularLocation>
        <location evidence="3 4">Cytoplasm</location>
        <location evidence="3 4">Cytoskeleton</location>
        <location evidence="3 4">Flagellum axoneme</location>
    </subcellularLocation>
</comment>
<comment type="domain">
    <text evidence="3">The TPR repeats are required for axonemal localization and flagellar beating.</text>
</comment>
<comment type="disruption phenotype">
    <text evidence="3">Defects in flagellar motility and cell mobility.</text>
</comment>
<accession>Q57ZB2</accession>
<accession>D6XDA7</accession>
<proteinExistence type="evidence at protein level"/>
<evidence type="ECO:0000255" key="1"/>
<evidence type="ECO:0000256" key="2">
    <source>
        <dbReference type="SAM" id="MobiDB-lite"/>
    </source>
</evidence>
<evidence type="ECO:0000269" key="3">
    <source>
    </source>
</evidence>
<evidence type="ECO:0000269" key="4">
    <source>
    </source>
</evidence>
<evidence type="ECO:0000303" key="5">
    <source>
    </source>
</evidence>
<evidence type="ECO:0000305" key="6"/>
<evidence type="ECO:0000312" key="7">
    <source>
        <dbReference type="EMBL" id="AAX80226.1"/>
    </source>
</evidence>
<evidence type="ECO:0000312" key="8">
    <source>
        <dbReference type="EMBL" id="AAZ10234.1"/>
    </source>
</evidence>
<evidence type="ECO:0000312" key="9">
    <source>
        <dbReference type="Proteomes" id="UP000008524"/>
    </source>
</evidence>
<feature type="chain" id="PRO_0000460166" description="Tetratricopeptide repeat protein 29">
    <location>
        <begin position="1"/>
        <end position="481"/>
    </location>
</feature>
<feature type="repeat" description="TPR 1" evidence="1">
    <location>
        <begin position="191"/>
        <end position="224"/>
    </location>
</feature>
<feature type="repeat" description="TPR 2" evidence="1">
    <location>
        <begin position="231"/>
        <end position="264"/>
    </location>
</feature>
<feature type="repeat" description="TPR 3" evidence="1">
    <location>
        <begin position="271"/>
        <end position="310"/>
    </location>
</feature>
<feature type="repeat" description="TPR 4" evidence="1">
    <location>
        <begin position="317"/>
        <end position="350"/>
    </location>
</feature>
<feature type="repeat" description="TPR 5" evidence="1">
    <location>
        <begin position="357"/>
        <end position="390"/>
    </location>
</feature>
<feature type="repeat" description="TPR 6" evidence="1">
    <location>
        <begin position="397"/>
        <end position="430"/>
    </location>
</feature>
<feature type="region of interest" description="Disordered" evidence="2">
    <location>
        <begin position="1"/>
        <end position="53"/>
    </location>
</feature>
<feature type="compositionally biased region" description="Low complexity" evidence="2">
    <location>
        <begin position="1"/>
        <end position="18"/>
    </location>
</feature>
<gene>
    <name evidence="5" type="primary">TTC29</name>
    <name evidence="8" type="ORF">Tb03.30P12.930</name>
    <name evidence="7" type="ORF">Tb927.3.1990</name>
</gene>
<name>TTC29_TRYB2</name>
<keyword id="KW-0002">3D-structure</keyword>
<keyword id="KW-0966">Cell projection</keyword>
<keyword id="KW-0969">Cilium</keyword>
<keyword id="KW-0963">Cytoplasm</keyword>
<keyword id="KW-0206">Cytoskeleton</keyword>
<keyword id="KW-0282">Flagellum</keyword>
<keyword id="KW-1185">Reference proteome</keyword>
<keyword id="KW-0677">Repeat</keyword>
<keyword id="KW-0802">TPR repeat</keyword>